<feature type="chain" id="PRO_0000266830" description="Probable GTP-binding protein EngB">
    <location>
        <begin position="1"/>
        <end position="241"/>
    </location>
</feature>
<feature type="domain" description="EngB-type G" evidence="1">
    <location>
        <begin position="56"/>
        <end position="240"/>
    </location>
</feature>
<feature type="binding site" evidence="1">
    <location>
        <begin position="64"/>
        <end position="71"/>
    </location>
    <ligand>
        <name>GTP</name>
        <dbReference type="ChEBI" id="CHEBI:37565"/>
    </ligand>
</feature>
<feature type="binding site" evidence="1">
    <location>
        <position position="71"/>
    </location>
    <ligand>
        <name>Mg(2+)</name>
        <dbReference type="ChEBI" id="CHEBI:18420"/>
    </ligand>
</feature>
<feature type="binding site" evidence="1">
    <location>
        <begin position="91"/>
        <end position="95"/>
    </location>
    <ligand>
        <name>GTP</name>
        <dbReference type="ChEBI" id="CHEBI:37565"/>
    </ligand>
</feature>
<feature type="binding site" evidence="1">
    <location>
        <position position="93"/>
    </location>
    <ligand>
        <name>Mg(2+)</name>
        <dbReference type="ChEBI" id="CHEBI:18420"/>
    </ligand>
</feature>
<feature type="binding site" evidence="1">
    <location>
        <begin position="118"/>
        <end position="121"/>
    </location>
    <ligand>
        <name>GTP</name>
        <dbReference type="ChEBI" id="CHEBI:37565"/>
    </ligand>
</feature>
<feature type="binding site" evidence="1">
    <location>
        <begin position="185"/>
        <end position="188"/>
    </location>
    <ligand>
        <name>GTP</name>
        <dbReference type="ChEBI" id="CHEBI:37565"/>
    </ligand>
</feature>
<feature type="binding site" evidence="1">
    <location>
        <begin position="219"/>
        <end position="221"/>
    </location>
    <ligand>
        <name>GTP</name>
        <dbReference type="ChEBI" id="CHEBI:37565"/>
    </ligand>
</feature>
<protein>
    <recommendedName>
        <fullName evidence="1">Probable GTP-binding protein EngB</fullName>
    </recommendedName>
</protein>
<accession>Q576T9</accession>
<organism>
    <name type="scientific">Brucella abortus biovar 1 (strain 9-941)</name>
    <dbReference type="NCBI Taxonomy" id="262698"/>
    <lineage>
        <taxon>Bacteria</taxon>
        <taxon>Pseudomonadati</taxon>
        <taxon>Pseudomonadota</taxon>
        <taxon>Alphaproteobacteria</taxon>
        <taxon>Hyphomicrobiales</taxon>
        <taxon>Brucellaceae</taxon>
        <taxon>Brucella/Ochrobactrum group</taxon>
        <taxon>Brucella</taxon>
    </lineage>
</organism>
<comment type="function">
    <text evidence="1">Necessary for normal cell division and for the maintenance of normal septation.</text>
</comment>
<comment type="cofactor">
    <cofactor evidence="1">
        <name>Mg(2+)</name>
        <dbReference type="ChEBI" id="CHEBI:18420"/>
    </cofactor>
</comment>
<comment type="similarity">
    <text evidence="1">Belongs to the TRAFAC class TrmE-Era-EngA-EngB-Septin-like GTPase superfamily. EngB GTPase family.</text>
</comment>
<comment type="sequence caution" evidence="2">
    <conflict type="erroneous initiation">
        <sequence resource="EMBL-CDS" id="AAX76345"/>
    </conflict>
</comment>
<dbReference type="EMBL" id="AE017224">
    <property type="protein sequence ID" value="AAX76345.1"/>
    <property type="status" value="ALT_INIT"/>
    <property type="molecule type" value="Genomic_DNA"/>
</dbReference>
<dbReference type="SMR" id="Q576T9"/>
<dbReference type="EnsemblBacteria" id="AAX76345">
    <property type="protein sequence ID" value="AAX76345"/>
    <property type="gene ID" value="BruAb2_0964"/>
</dbReference>
<dbReference type="KEGG" id="bmb:BruAb2_0964"/>
<dbReference type="HOGENOM" id="CLU_033732_2_0_5"/>
<dbReference type="Proteomes" id="UP000000540">
    <property type="component" value="Chromosome II"/>
</dbReference>
<dbReference type="GO" id="GO:0005829">
    <property type="term" value="C:cytosol"/>
    <property type="evidence" value="ECO:0007669"/>
    <property type="project" value="TreeGrafter"/>
</dbReference>
<dbReference type="GO" id="GO:0005525">
    <property type="term" value="F:GTP binding"/>
    <property type="evidence" value="ECO:0007669"/>
    <property type="project" value="UniProtKB-UniRule"/>
</dbReference>
<dbReference type="GO" id="GO:0046872">
    <property type="term" value="F:metal ion binding"/>
    <property type="evidence" value="ECO:0007669"/>
    <property type="project" value="UniProtKB-KW"/>
</dbReference>
<dbReference type="GO" id="GO:0000917">
    <property type="term" value="P:division septum assembly"/>
    <property type="evidence" value="ECO:0007669"/>
    <property type="project" value="UniProtKB-KW"/>
</dbReference>
<dbReference type="CDD" id="cd01876">
    <property type="entry name" value="YihA_EngB"/>
    <property type="match status" value="1"/>
</dbReference>
<dbReference type="Gene3D" id="3.40.50.300">
    <property type="entry name" value="P-loop containing nucleotide triphosphate hydrolases"/>
    <property type="match status" value="1"/>
</dbReference>
<dbReference type="HAMAP" id="MF_00321">
    <property type="entry name" value="GTPase_EngB"/>
    <property type="match status" value="1"/>
</dbReference>
<dbReference type="InterPro" id="IPR030393">
    <property type="entry name" value="G_ENGB_dom"/>
</dbReference>
<dbReference type="InterPro" id="IPR006073">
    <property type="entry name" value="GTP-bd"/>
</dbReference>
<dbReference type="InterPro" id="IPR019987">
    <property type="entry name" value="GTP-bd_ribosome_bio_YsxC"/>
</dbReference>
<dbReference type="InterPro" id="IPR027417">
    <property type="entry name" value="P-loop_NTPase"/>
</dbReference>
<dbReference type="NCBIfam" id="TIGR03598">
    <property type="entry name" value="GTPase_YsxC"/>
    <property type="match status" value="1"/>
</dbReference>
<dbReference type="PANTHER" id="PTHR11649:SF13">
    <property type="entry name" value="ENGB-TYPE G DOMAIN-CONTAINING PROTEIN"/>
    <property type="match status" value="1"/>
</dbReference>
<dbReference type="PANTHER" id="PTHR11649">
    <property type="entry name" value="MSS1/TRME-RELATED GTP-BINDING PROTEIN"/>
    <property type="match status" value="1"/>
</dbReference>
<dbReference type="Pfam" id="PF01926">
    <property type="entry name" value="MMR_HSR1"/>
    <property type="match status" value="1"/>
</dbReference>
<dbReference type="SUPFAM" id="SSF52540">
    <property type="entry name" value="P-loop containing nucleoside triphosphate hydrolases"/>
    <property type="match status" value="1"/>
</dbReference>
<dbReference type="PROSITE" id="PS51706">
    <property type="entry name" value="G_ENGB"/>
    <property type="match status" value="1"/>
</dbReference>
<gene>
    <name evidence="1" type="primary">engB</name>
    <name type="ordered locus">BruAb2_0964</name>
</gene>
<reference key="1">
    <citation type="journal article" date="2005" name="J. Bacteriol.">
        <title>Completion of the genome sequence of Brucella abortus and comparison to the highly similar genomes of Brucella melitensis and Brucella suis.</title>
        <authorList>
            <person name="Halling S.M."/>
            <person name="Peterson-Burch B.D."/>
            <person name="Bricker B.J."/>
            <person name="Zuerner R.L."/>
            <person name="Qing Z."/>
            <person name="Li L.-L."/>
            <person name="Kapur V."/>
            <person name="Alt D.P."/>
            <person name="Olsen S.C."/>
        </authorList>
    </citation>
    <scope>NUCLEOTIDE SEQUENCE [LARGE SCALE GENOMIC DNA]</scope>
    <source>
        <strain>9-941</strain>
    </source>
</reference>
<evidence type="ECO:0000255" key="1">
    <source>
        <dbReference type="HAMAP-Rule" id="MF_00321"/>
    </source>
</evidence>
<evidence type="ECO:0000305" key="2"/>
<sequence length="241" mass="26254">MSEQDKKQAAIKAAQAAADAVREAQAALAEEGRLLFKKSWIFIRGVPSMKFLPPEGPVEIAFAGRSNVGKSSLINALVGKKGLARTSNTPGRTQELNYFVPDGYSGENGDLPPLALVDMPGYGFAEAPKAQVDAWTRLVFDYLRGRTTLKRVYVLIDARHGIKKNDAEVLDLLDKAAVSYQIVLTKIDKIKPAGVPRLLEETHKLTYKRAACFPGIIATSSEKGQGLDDLRAAIALLLKEY</sequence>
<keyword id="KW-0131">Cell cycle</keyword>
<keyword id="KW-0132">Cell division</keyword>
<keyword id="KW-0342">GTP-binding</keyword>
<keyword id="KW-0460">Magnesium</keyword>
<keyword id="KW-0479">Metal-binding</keyword>
<keyword id="KW-0547">Nucleotide-binding</keyword>
<keyword id="KW-0717">Septation</keyword>
<name>ENGB_BRUAB</name>
<proteinExistence type="inferred from homology"/>